<sequence length="444" mass="49913">MNVVVCSGGTATNSLTPCFSNISILKGHELTYILPISDNGGSTSEILRIVGGPAIGDIRSRIVRLLQDEQLVELFGHRLPNDKLLAKKEWNEIVEGSHPIWKNISIEVKEMCRSFIIHMQAELLKKIKHSNPFQFESASIGNFFLTGARLFLGSLDASIELMMRIGRCSPLVHVIPCINTNHTHHISALLTNGEMITGQSQISHPSKSVPKDNSIAHSAKFIHLLGSYDDHLKILLDDEEEEAEEEYANPIYILPELKNSQLHFDKLDESQNLPAPVHRILYINPYGEEIKPMGNPRAISKVKKADMVVYSIGSLMTSLLPILILGNLAEVILESNNTKKVLLINNKYDREVFGLDGLHYVQMIIDSMSRAIAGYRQSKGVHSENDDFEWQDFITDIVYLKNGEIEIDETIFEKHSIRCHQIASSDKMESEELEKVLNQIGLKN</sequence>
<proteinExistence type="evidence at protein level"/>
<reference key="1">
    <citation type="journal article" date="1997" name="Nature">
        <title>The nucleotide sequence of Saccharomyces cerevisiae chromosome XIV and its evolutionary implications.</title>
        <authorList>
            <person name="Philippsen P."/>
            <person name="Kleine K."/>
            <person name="Poehlmann R."/>
            <person name="Duesterhoeft A."/>
            <person name="Hamberg K."/>
            <person name="Hegemann J.H."/>
            <person name="Obermaier B."/>
            <person name="Urrestarazu L.A."/>
            <person name="Aert R."/>
            <person name="Albermann K."/>
            <person name="Altmann R."/>
            <person name="Andre B."/>
            <person name="Baladron V."/>
            <person name="Ballesta J.P.G."/>
            <person name="Becam A.-M."/>
            <person name="Beinhauer J.D."/>
            <person name="Boskovic J."/>
            <person name="Buitrago M.J."/>
            <person name="Bussereau F."/>
            <person name="Coster F."/>
            <person name="Crouzet M."/>
            <person name="D'Angelo M."/>
            <person name="Dal Pero F."/>
            <person name="De Antoni A."/>
            <person name="del Rey F."/>
            <person name="Doignon F."/>
            <person name="Domdey H."/>
            <person name="Dubois E."/>
            <person name="Fiedler T.A."/>
            <person name="Fleig U."/>
            <person name="Floeth M."/>
            <person name="Fritz C."/>
            <person name="Gaillardin C."/>
            <person name="Garcia-Cantalejo J.M."/>
            <person name="Glansdorff N."/>
            <person name="Goffeau A."/>
            <person name="Gueldener U."/>
            <person name="Herbert C.J."/>
            <person name="Heumann K."/>
            <person name="Heuss-Neitzel D."/>
            <person name="Hilbert H."/>
            <person name="Hinni K."/>
            <person name="Iraqui Houssaini I."/>
            <person name="Jacquet M."/>
            <person name="Jimenez A."/>
            <person name="Jonniaux J.-L."/>
            <person name="Karpfinger-Hartl L."/>
            <person name="Lanfranchi G."/>
            <person name="Lepingle A."/>
            <person name="Levesque H."/>
            <person name="Lyck R."/>
            <person name="Maftahi M."/>
            <person name="Mallet L."/>
            <person name="Maurer C.T.C."/>
            <person name="Messenguy F."/>
            <person name="Mewes H.-W."/>
            <person name="Moestl D."/>
            <person name="Nasr F."/>
            <person name="Nicaud J.-M."/>
            <person name="Niedenthal R.K."/>
            <person name="Pandolfo D."/>
            <person name="Pierard A."/>
            <person name="Piravandi E."/>
            <person name="Planta R.J."/>
            <person name="Pohl T.M."/>
            <person name="Purnelle B."/>
            <person name="Rebischung C."/>
            <person name="Remacha M.A."/>
            <person name="Revuelta J.L."/>
            <person name="Rinke M."/>
            <person name="Saiz J.E."/>
            <person name="Sartorello F."/>
            <person name="Scherens B."/>
            <person name="Sen-Gupta M."/>
            <person name="Soler-Mira A."/>
            <person name="Urbanus J.H.M."/>
            <person name="Valle G."/>
            <person name="Van Dyck L."/>
            <person name="Verhasselt P."/>
            <person name="Vierendeels F."/>
            <person name="Vissers S."/>
            <person name="Voet M."/>
            <person name="Volckaert G."/>
            <person name="Wach A."/>
            <person name="Wambutt R."/>
            <person name="Wedler H."/>
            <person name="Zollner A."/>
            <person name="Hani J."/>
        </authorList>
    </citation>
    <scope>NUCLEOTIDE SEQUENCE [LARGE SCALE GENOMIC DNA]</scope>
    <source>
        <strain>ATCC 204508 / S288c</strain>
    </source>
</reference>
<reference key="2">
    <citation type="journal article" date="2014" name="G3 (Bethesda)">
        <title>The reference genome sequence of Saccharomyces cerevisiae: Then and now.</title>
        <authorList>
            <person name="Engel S.R."/>
            <person name="Dietrich F.S."/>
            <person name="Fisk D.G."/>
            <person name="Binkley G."/>
            <person name="Balakrishnan R."/>
            <person name="Costanzo M.C."/>
            <person name="Dwight S.S."/>
            <person name="Hitz B.C."/>
            <person name="Karra K."/>
            <person name="Nash R.S."/>
            <person name="Weng S."/>
            <person name="Wong E.D."/>
            <person name="Lloyd P."/>
            <person name="Skrzypek M.S."/>
            <person name="Miyasato S.R."/>
            <person name="Simison M."/>
            <person name="Cherry J.M."/>
        </authorList>
    </citation>
    <scope>GENOME REANNOTATION</scope>
    <source>
        <strain>ATCC 204508 / S288c</strain>
    </source>
</reference>
<reference key="3">
    <citation type="journal article" date="2003" name="Nature">
        <title>Global analysis of protein expression in yeast.</title>
        <authorList>
            <person name="Ghaemmaghami S."/>
            <person name="Huh W.-K."/>
            <person name="Bower K."/>
            <person name="Howson R.W."/>
            <person name="Belle A."/>
            <person name="Dephoure N."/>
            <person name="O'Shea E.K."/>
            <person name="Weissman J.S."/>
        </authorList>
    </citation>
    <scope>LEVEL OF PROTEIN EXPRESSION [LARGE SCALE ANALYSIS]</scope>
</reference>
<gene>
    <name type="ordered locus">YNL011C</name>
    <name type="ORF">N2862</name>
</gene>
<feature type="chain" id="PRO_0000203465" description="Uncharacterized protein YNL011C">
    <location>
        <begin position="1"/>
        <end position="444"/>
    </location>
</feature>
<keyword id="KW-1185">Reference proteome</keyword>
<comment type="miscellaneous">
    <text evidence="1">Present with 1100 molecules/cell in log phase SD medium.</text>
</comment>
<dbReference type="EMBL" id="Z71287">
    <property type="protein sequence ID" value="CAA95871.1"/>
    <property type="molecule type" value="Genomic_DNA"/>
</dbReference>
<dbReference type="EMBL" id="BK006947">
    <property type="protein sequence ID" value="DAA10532.1"/>
    <property type="molecule type" value="Genomic_DNA"/>
</dbReference>
<dbReference type="PIR" id="S62923">
    <property type="entry name" value="S62923"/>
</dbReference>
<dbReference type="RefSeq" id="NP_014387.1">
    <property type="nucleotide sequence ID" value="NM_001182850.1"/>
</dbReference>
<dbReference type="BioGRID" id="35814">
    <property type="interactions" value="30"/>
</dbReference>
<dbReference type="DIP" id="DIP-2805N"/>
<dbReference type="FunCoup" id="P53980">
    <property type="interactions" value="100"/>
</dbReference>
<dbReference type="IntAct" id="P53980">
    <property type="interactions" value="1"/>
</dbReference>
<dbReference type="MINT" id="P53980"/>
<dbReference type="STRING" id="4932.YNL011C"/>
<dbReference type="iPTMnet" id="P53980"/>
<dbReference type="PaxDb" id="4932-YNL011C"/>
<dbReference type="PeptideAtlas" id="P53980"/>
<dbReference type="EnsemblFungi" id="YNL011C_mRNA">
    <property type="protein sequence ID" value="YNL011C"/>
    <property type="gene ID" value="YNL011C"/>
</dbReference>
<dbReference type="GeneID" id="855721"/>
<dbReference type="KEGG" id="sce:YNL011C"/>
<dbReference type="AGR" id="SGD:S000004956"/>
<dbReference type="SGD" id="S000004956">
    <property type="gene designation" value="YNL011C"/>
</dbReference>
<dbReference type="VEuPathDB" id="FungiDB:YNL011C"/>
<dbReference type="eggNOG" id="ENOG502QUXN">
    <property type="taxonomic scope" value="Eukaryota"/>
</dbReference>
<dbReference type="HOGENOM" id="CLU_019029_3_0_1"/>
<dbReference type="InParanoid" id="P53980"/>
<dbReference type="OMA" id="RITRIWY"/>
<dbReference type="OrthoDB" id="10267139at2759"/>
<dbReference type="BioCyc" id="YEAST:G3O-33052-MONOMER"/>
<dbReference type="BioGRID-ORCS" id="855721">
    <property type="hits" value="0 hits in 10 CRISPR screens"/>
</dbReference>
<dbReference type="PRO" id="PR:P53980"/>
<dbReference type="Proteomes" id="UP000002311">
    <property type="component" value="Chromosome XIV"/>
</dbReference>
<dbReference type="RNAct" id="P53980">
    <property type="molecule type" value="protein"/>
</dbReference>
<dbReference type="GO" id="GO:0043743">
    <property type="term" value="F:LPPG:FO 2-phospho-L-lactate transferase activity"/>
    <property type="evidence" value="ECO:0007669"/>
    <property type="project" value="InterPro"/>
</dbReference>
<dbReference type="CDD" id="cd07187">
    <property type="entry name" value="YvcK_like"/>
    <property type="match status" value="1"/>
</dbReference>
<dbReference type="Gene3D" id="3.40.50.10680">
    <property type="entry name" value="CofD-like domains"/>
    <property type="match status" value="1"/>
</dbReference>
<dbReference type="InterPro" id="IPR002882">
    <property type="entry name" value="CofD"/>
</dbReference>
<dbReference type="InterPro" id="IPR038136">
    <property type="entry name" value="CofD-like_dom_sf"/>
</dbReference>
<dbReference type="PANTHER" id="PTHR31240">
    <property type="entry name" value="MATERNAL EFFECT EMBRYO ARREST 18"/>
    <property type="match status" value="1"/>
</dbReference>
<dbReference type="PANTHER" id="PTHR31240:SF0">
    <property type="entry name" value="MATERNAL EFFECT EMBRYO ARREST 18"/>
    <property type="match status" value="1"/>
</dbReference>
<dbReference type="Pfam" id="PF01933">
    <property type="entry name" value="CofD"/>
    <property type="match status" value="1"/>
</dbReference>
<dbReference type="SUPFAM" id="SSF142338">
    <property type="entry name" value="CofD-like"/>
    <property type="match status" value="1"/>
</dbReference>
<name>YNB1_YEAST</name>
<accession>P53980</accession>
<accession>D6W1G6</accession>
<protein>
    <recommendedName>
        <fullName>Uncharacterized protein YNL011C</fullName>
    </recommendedName>
</protein>
<evidence type="ECO:0000269" key="1">
    <source>
    </source>
</evidence>
<organism>
    <name type="scientific">Saccharomyces cerevisiae (strain ATCC 204508 / S288c)</name>
    <name type="common">Baker's yeast</name>
    <dbReference type="NCBI Taxonomy" id="559292"/>
    <lineage>
        <taxon>Eukaryota</taxon>
        <taxon>Fungi</taxon>
        <taxon>Dikarya</taxon>
        <taxon>Ascomycota</taxon>
        <taxon>Saccharomycotina</taxon>
        <taxon>Saccharomycetes</taxon>
        <taxon>Saccharomycetales</taxon>
        <taxon>Saccharomycetaceae</taxon>
        <taxon>Saccharomyces</taxon>
    </lineage>
</organism>